<evidence type="ECO:0000250" key="1"/>
<evidence type="ECO:0000255" key="2"/>
<evidence type="ECO:0000305" key="3"/>
<evidence type="ECO:0000312" key="4">
    <source>
        <dbReference type="PomBase" id="SPAC1A6.10"/>
    </source>
</evidence>
<name>TCD_SCHPO</name>
<dbReference type="EC" id="6.1.-.-"/>
<dbReference type="EMBL" id="CU329670">
    <property type="protein sequence ID" value="CAK9837414.1"/>
    <property type="molecule type" value="Genomic_DNA"/>
</dbReference>
<dbReference type="PIR" id="T38013">
    <property type="entry name" value="T38013"/>
</dbReference>
<dbReference type="RefSeq" id="NP_593202.1">
    <property type="nucleotide sequence ID" value="NM_001018598.2"/>
</dbReference>
<dbReference type="SMR" id="O13861"/>
<dbReference type="FunCoup" id="O13861">
    <property type="interactions" value="33"/>
</dbReference>
<dbReference type="STRING" id="284812.O13861"/>
<dbReference type="iPTMnet" id="O13861"/>
<dbReference type="PaxDb" id="4896-SPAC1A6.10.1"/>
<dbReference type="EnsemblFungi" id="SPAC1A6.10.1">
    <property type="protein sequence ID" value="SPAC1A6.10.1:pep"/>
    <property type="gene ID" value="SPAC1A6.10"/>
</dbReference>
<dbReference type="GeneID" id="2542532"/>
<dbReference type="KEGG" id="spo:2542532"/>
<dbReference type="PomBase" id="SPAC1A6.10">
    <property type="gene designation" value="tcd1"/>
</dbReference>
<dbReference type="VEuPathDB" id="FungiDB:SPAC1A6.10"/>
<dbReference type="eggNOG" id="KOG2018">
    <property type="taxonomic scope" value="Eukaryota"/>
</dbReference>
<dbReference type="HOGENOM" id="CLU_013325_9_3_1"/>
<dbReference type="InParanoid" id="O13861"/>
<dbReference type="OMA" id="ISYTMYD"/>
<dbReference type="PhylomeDB" id="O13861"/>
<dbReference type="PRO" id="PR:O13861"/>
<dbReference type="Proteomes" id="UP000002485">
    <property type="component" value="Chromosome I"/>
</dbReference>
<dbReference type="GO" id="GO:0016020">
    <property type="term" value="C:membrane"/>
    <property type="evidence" value="ECO:0007669"/>
    <property type="project" value="UniProtKB-KW"/>
</dbReference>
<dbReference type="GO" id="GO:0005741">
    <property type="term" value="C:mitochondrial outer membrane"/>
    <property type="evidence" value="ECO:0000266"/>
    <property type="project" value="PomBase"/>
</dbReference>
<dbReference type="GO" id="GO:0005524">
    <property type="term" value="F:ATP binding"/>
    <property type="evidence" value="ECO:0007669"/>
    <property type="project" value="UniProtKB-KW"/>
</dbReference>
<dbReference type="GO" id="GO:0016887">
    <property type="term" value="F:ATP hydrolysis activity"/>
    <property type="evidence" value="ECO:0007669"/>
    <property type="project" value="UniProtKB-ARBA"/>
</dbReference>
<dbReference type="GO" id="GO:0061503">
    <property type="term" value="F:tRNA threonylcarbamoyladenosine dehydratase"/>
    <property type="evidence" value="ECO:0000318"/>
    <property type="project" value="GO_Central"/>
</dbReference>
<dbReference type="GO" id="GO:0008641">
    <property type="term" value="F:ubiquitin-like modifier activating enzyme activity"/>
    <property type="evidence" value="ECO:0007669"/>
    <property type="project" value="InterPro"/>
</dbReference>
<dbReference type="GO" id="GO:0061504">
    <property type="term" value="P:cyclic threonylcarbamoyladenosine biosynthetic process"/>
    <property type="evidence" value="ECO:0000318"/>
    <property type="project" value="GO_Central"/>
</dbReference>
<dbReference type="CDD" id="cd00755">
    <property type="entry name" value="YgdL_like"/>
    <property type="match status" value="1"/>
</dbReference>
<dbReference type="FunFam" id="3.40.50.720:FF:000125">
    <property type="entry name" value="tRNA threonylcarbamoyladenosine dehydratase 2-like"/>
    <property type="match status" value="1"/>
</dbReference>
<dbReference type="Gene3D" id="3.40.50.720">
    <property type="entry name" value="NAD(P)-binding Rossmann-like Domain"/>
    <property type="match status" value="1"/>
</dbReference>
<dbReference type="InterPro" id="IPR045886">
    <property type="entry name" value="ThiF/MoeB/HesA"/>
</dbReference>
<dbReference type="InterPro" id="IPR000594">
    <property type="entry name" value="ThiF_NAD_FAD-bd"/>
</dbReference>
<dbReference type="InterPro" id="IPR035985">
    <property type="entry name" value="Ubiquitin-activating_enz"/>
</dbReference>
<dbReference type="PANTHER" id="PTHR43267">
    <property type="entry name" value="TRNA THREONYLCARBAMOYLADENOSINE DEHYDRATASE"/>
    <property type="match status" value="1"/>
</dbReference>
<dbReference type="PANTHER" id="PTHR43267:SF2">
    <property type="entry name" value="TRNA THREONYLCARBAMOYLADENOSINE DEHYDRATASE 1-RELATED"/>
    <property type="match status" value="1"/>
</dbReference>
<dbReference type="Pfam" id="PF00899">
    <property type="entry name" value="ThiF"/>
    <property type="match status" value="1"/>
</dbReference>
<dbReference type="SUPFAM" id="SSF69572">
    <property type="entry name" value="Activating enzymes of the ubiquitin-like proteins"/>
    <property type="match status" value="1"/>
</dbReference>
<reference key="1">
    <citation type="journal article" date="2002" name="Nature">
        <title>The genome sequence of Schizosaccharomyces pombe.</title>
        <authorList>
            <person name="Wood V."/>
            <person name="Gwilliam R."/>
            <person name="Rajandream M.A."/>
            <person name="Lyne M.H."/>
            <person name="Lyne R."/>
            <person name="Stewart A."/>
            <person name="Sgouros J.G."/>
            <person name="Peat N."/>
            <person name="Hayles J."/>
            <person name="Baker S.G."/>
            <person name="Basham D."/>
            <person name="Bowman S."/>
            <person name="Brooks K."/>
            <person name="Brown D."/>
            <person name="Brown S."/>
            <person name="Chillingworth T."/>
            <person name="Churcher C.M."/>
            <person name="Collins M."/>
            <person name="Connor R."/>
            <person name="Cronin A."/>
            <person name="Davis P."/>
            <person name="Feltwell T."/>
            <person name="Fraser A."/>
            <person name="Gentles S."/>
            <person name="Goble A."/>
            <person name="Hamlin N."/>
            <person name="Harris D.E."/>
            <person name="Hidalgo J."/>
            <person name="Hodgson G."/>
            <person name="Holroyd S."/>
            <person name="Hornsby T."/>
            <person name="Howarth S."/>
            <person name="Huckle E.J."/>
            <person name="Hunt S."/>
            <person name="Jagels K."/>
            <person name="James K.D."/>
            <person name="Jones L."/>
            <person name="Jones M."/>
            <person name="Leather S."/>
            <person name="McDonald S."/>
            <person name="McLean J."/>
            <person name="Mooney P."/>
            <person name="Moule S."/>
            <person name="Mungall K.L."/>
            <person name="Murphy L.D."/>
            <person name="Niblett D."/>
            <person name="Odell C."/>
            <person name="Oliver K."/>
            <person name="O'Neil S."/>
            <person name="Pearson D."/>
            <person name="Quail M.A."/>
            <person name="Rabbinowitsch E."/>
            <person name="Rutherford K.M."/>
            <person name="Rutter S."/>
            <person name="Saunders D."/>
            <person name="Seeger K."/>
            <person name="Sharp S."/>
            <person name="Skelton J."/>
            <person name="Simmonds M.N."/>
            <person name="Squares R."/>
            <person name="Squares S."/>
            <person name="Stevens K."/>
            <person name="Taylor K."/>
            <person name="Taylor R.G."/>
            <person name="Tivey A."/>
            <person name="Walsh S.V."/>
            <person name="Warren T."/>
            <person name="Whitehead S."/>
            <person name="Woodward J.R."/>
            <person name="Volckaert G."/>
            <person name="Aert R."/>
            <person name="Robben J."/>
            <person name="Grymonprez B."/>
            <person name="Weltjens I."/>
            <person name="Vanstreels E."/>
            <person name="Rieger M."/>
            <person name="Schaefer M."/>
            <person name="Mueller-Auer S."/>
            <person name="Gabel C."/>
            <person name="Fuchs M."/>
            <person name="Duesterhoeft A."/>
            <person name="Fritzc C."/>
            <person name="Holzer E."/>
            <person name="Moestl D."/>
            <person name="Hilbert H."/>
            <person name="Borzym K."/>
            <person name="Langer I."/>
            <person name="Beck A."/>
            <person name="Lehrach H."/>
            <person name="Reinhardt R."/>
            <person name="Pohl T.M."/>
            <person name="Eger P."/>
            <person name="Zimmermann W."/>
            <person name="Wedler H."/>
            <person name="Wambutt R."/>
            <person name="Purnelle B."/>
            <person name="Goffeau A."/>
            <person name="Cadieu E."/>
            <person name="Dreano S."/>
            <person name="Gloux S."/>
            <person name="Lelaure V."/>
            <person name="Mottier S."/>
            <person name="Galibert F."/>
            <person name="Aves S.J."/>
            <person name="Xiang Z."/>
            <person name="Hunt C."/>
            <person name="Moore K."/>
            <person name="Hurst S.M."/>
            <person name="Lucas M."/>
            <person name="Rochet M."/>
            <person name="Gaillardin C."/>
            <person name="Tallada V.A."/>
            <person name="Garzon A."/>
            <person name="Thode G."/>
            <person name="Daga R.R."/>
            <person name="Cruzado L."/>
            <person name="Jimenez J."/>
            <person name="Sanchez M."/>
            <person name="del Rey F."/>
            <person name="Benito J."/>
            <person name="Dominguez A."/>
            <person name="Revuelta J.L."/>
            <person name="Moreno S."/>
            <person name="Armstrong J."/>
            <person name="Forsburg S.L."/>
            <person name="Cerutti L."/>
            <person name="Lowe T."/>
            <person name="McCombie W.R."/>
            <person name="Paulsen I."/>
            <person name="Potashkin J."/>
            <person name="Shpakovski G.V."/>
            <person name="Ussery D."/>
            <person name="Barrell B.G."/>
            <person name="Nurse P."/>
        </authorList>
    </citation>
    <scope>NUCLEOTIDE SEQUENCE [LARGE SCALE GENOMIC DNA]</scope>
    <source>
        <strain>972 / ATCC 24843</strain>
    </source>
</reference>
<keyword id="KW-0067">ATP-binding</keyword>
<keyword id="KW-0436">Ligase</keyword>
<keyword id="KW-0472">Membrane</keyword>
<keyword id="KW-0496">Mitochondrion</keyword>
<keyword id="KW-1000">Mitochondrion outer membrane</keyword>
<keyword id="KW-0547">Nucleotide-binding</keyword>
<keyword id="KW-1185">Reference proteome</keyword>
<keyword id="KW-0812">Transmembrane</keyword>
<keyword id="KW-1133">Transmembrane helix</keyword>
<feature type="chain" id="PRO_0000120582" description="tRNA threonylcarbamoyladenosine dehydratase">
    <location>
        <begin position="1"/>
        <end position="468"/>
    </location>
</feature>
<feature type="transmembrane region" description="Helical" evidence="2">
    <location>
        <begin position="15"/>
        <end position="35"/>
    </location>
</feature>
<feature type="transmembrane region" description="Helical" evidence="2">
    <location>
        <begin position="109"/>
        <end position="129"/>
    </location>
</feature>
<feature type="transmembrane region" description="Helical" evidence="2">
    <location>
        <begin position="315"/>
        <end position="335"/>
    </location>
</feature>
<gene>
    <name type="primary">tcd1</name>
    <name evidence="4" type="ORF">SPAC1A6.10</name>
    <name type="ORF">SPAC30D11.15c</name>
</gene>
<proteinExistence type="inferred from homology"/>
<comment type="function">
    <text evidence="1">Catalyzes the ATP-dependent dehydration of threonylcarbamoyladenosine at position 37 (t(6)A37) to form cyclic t(6)A37 (ct(6)A37) in tRNAs that read codons beginning with adenine.</text>
</comment>
<comment type="subcellular location">
    <subcellularLocation>
        <location evidence="1">Mitochondrion outer membrane</location>
        <topology evidence="3">Multi-pass membrane protein</topology>
    </subcellularLocation>
</comment>
<comment type="similarity">
    <text evidence="3">Belongs to the HesA/MoeB/ThiF family.</text>
</comment>
<accession>O13861</accession>
<accession>A0AAN2H641</accession>
<accession>Q9UT99</accession>
<sequence>MAGFKVPSWITYKSFWIAVSSSVTTACVILGTLEFRKHRSIRRLQSMIVPEAGKSIQLSSSGVPIEIYDAGEEDEGISKGVPYDENLIREQLARNYAFFGEDGMERLRNSFVIVVGCGGVGSWVINMLARSGVQKIRIVDFDQVSLSSLNRHSIATLQDVGTPKTLAIKKAIKKFAPWIEVDARNALFNPDSADDLLSGNPDFVIDAIDNIQTKVDLLSYCYNHKLPVIASTGSACKSDPTRVNIADISATSEDPLSRATRRRLRLLGIMEGIPVVFSTEKPDPRKASLLPLSEEEFEKGDVDELSALPEFRARILPVIGPMPGIFGLTIATYVLTSIAKYPMDPISTMTRPRLYEEAVKRLHAEARKAGVNLDKTFNASEMSYIIEEVYVGRSALPPHESQKVTVVRWNPQLPFDHTNLVAMTRNEARYHEDNVLAKNVDPSTVYGKDVIEVVHSFLRRLRMWEMLY</sequence>
<organism>
    <name type="scientific">Schizosaccharomyces pombe (strain 972 / ATCC 24843)</name>
    <name type="common">Fission yeast</name>
    <dbReference type="NCBI Taxonomy" id="284812"/>
    <lineage>
        <taxon>Eukaryota</taxon>
        <taxon>Fungi</taxon>
        <taxon>Dikarya</taxon>
        <taxon>Ascomycota</taxon>
        <taxon>Taphrinomycotina</taxon>
        <taxon>Schizosaccharomycetes</taxon>
        <taxon>Schizosaccharomycetales</taxon>
        <taxon>Schizosaccharomycetaceae</taxon>
        <taxon>Schizosaccharomyces</taxon>
    </lineage>
</organism>
<protein>
    <recommendedName>
        <fullName>tRNA threonylcarbamoyladenosine dehydratase</fullName>
        <ecNumber>6.1.-.-</ecNumber>
    </recommendedName>
    <alternativeName>
        <fullName>t(6)A37 dehydratase</fullName>
    </alternativeName>
</protein>